<organism>
    <name type="scientific">Mycobacterium tuberculosis (strain CDC 1551 / Oshkosh)</name>
    <dbReference type="NCBI Taxonomy" id="83331"/>
    <lineage>
        <taxon>Bacteria</taxon>
        <taxon>Bacillati</taxon>
        <taxon>Actinomycetota</taxon>
        <taxon>Actinomycetes</taxon>
        <taxon>Mycobacteriales</taxon>
        <taxon>Mycobacteriaceae</taxon>
        <taxon>Mycobacterium</taxon>
        <taxon>Mycobacterium tuberculosis complex</taxon>
    </lineage>
</organism>
<comment type="similarity">
    <text evidence="3">Belongs to the NTE family.</text>
</comment>
<keyword id="KW-0378">Hydrolase</keyword>
<keyword id="KW-0442">Lipid degradation</keyword>
<keyword id="KW-0443">Lipid metabolism</keyword>
<keyword id="KW-1185">Reference proteome</keyword>
<feature type="chain" id="PRO_0000427923" description="Uncharacterized NTE family protein MT2641">
    <location>
        <begin position="1"/>
        <end position="583"/>
    </location>
</feature>
<feature type="domain" description="PNPLA" evidence="2">
    <location>
        <begin position="309"/>
        <end position="469"/>
    </location>
</feature>
<feature type="short sequence motif" description="GXGXXG" evidence="2">
    <location>
        <begin position="313"/>
        <end position="318"/>
    </location>
</feature>
<feature type="short sequence motif" description="GXSXG" evidence="2">
    <location>
        <begin position="340"/>
        <end position="344"/>
    </location>
</feature>
<feature type="short sequence motif" description="DGA/G" evidence="2">
    <location>
        <begin position="456"/>
        <end position="458"/>
    </location>
</feature>
<feature type="active site" description="Nucleophile" evidence="2">
    <location>
        <position position="342"/>
    </location>
</feature>
<feature type="active site" description="Proton acceptor" evidence="2">
    <location>
        <position position="456"/>
    </location>
</feature>
<feature type="binding site" evidence="1">
    <location>
        <begin position="24"/>
        <end position="140"/>
    </location>
    <ligand>
        <name>a nucleoside 3',5'-cyclic phosphate</name>
        <dbReference type="ChEBI" id="CHEBI:58464"/>
    </ligand>
</feature>
<proteinExistence type="inferred from homology"/>
<dbReference type="EMBL" id="AE000516">
    <property type="protein sequence ID" value="AAK46954.1"/>
    <property type="molecule type" value="Genomic_DNA"/>
</dbReference>
<dbReference type="PIR" id="A70729">
    <property type="entry name" value="A70729"/>
</dbReference>
<dbReference type="RefSeq" id="WP_003899379.1">
    <property type="nucleotide sequence ID" value="NZ_KK341227.1"/>
</dbReference>
<dbReference type="SMR" id="P9WIY6"/>
<dbReference type="KEGG" id="mtc:MT2641"/>
<dbReference type="PATRIC" id="fig|83331.31.peg.2848"/>
<dbReference type="HOGENOM" id="CLU_000960_1_3_11"/>
<dbReference type="Proteomes" id="UP000001020">
    <property type="component" value="Chromosome"/>
</dbReference>
<dbReference type="GO" id="GO:0004622">
    <property type="term" value="F:lysophospholipase activity"/>
    <property type="evidence" value="ECO:0007669"/>
    <property type="project" value="InterPro"/>
</dbReference>
<dbReference type="GO" id="GO:0016042">
    <property type="term" value="P:lipid catabolic process"/>
    <property type="evidence" value="ECO:0007669"/>
    <property type="project" value="UniProtKB-KW"/>
</dbReference>
<dbReference type="GO" id="GO:0046470">
    <property type="term" value="P:phosphatidylcholine metabolic process"/>
    <property type="evidence" value="ECO:0007669"/>
    <property type="project" value="InterPro"/>
</dbReference>
<dbReference type="CDD" id="cd00038">
    <property type="entry name" value="CAP_ED"/>
    <property type="match status" value="1"/>
</dbReference>
<dbReference type="CDD" id="cd07205">
    <property type="entry name" value="Pat_PNPLA6_PNPLA7_NTE1_like"/>
    <property type="match status" value="1"/>
</dbReference>
<dbReference type="Gene3D" id="3.40.1090.10">
    <property type="entry name" value="Cytosolic phospholipase A2 catalytic domain"/>
    <property type="match status" value="2"/>
</dbReference>
<dbReference type="Gene3D" id="2.60.120.10">
    <property type="entry name" value="Jelly Rolls"/>
    <property type="match status" value="1"/>
</dbReference>
<dbReference type="InterPro" id="IPR016035">
    <property type="entry name" value="Acyl_Trfase/lysoPLipase"/>
</dbReference>
<dbReference type="InterPro" id="IPR000595">
    <property type="entry name" value="cNMP-bd_dom"/>
</dbReference>
<dbReference type="InterPro" id="IPR018490">
    <property type="entry name" value="cNMP-bd_dom_sf"/>
</dbReference>
<dbReference type="InterPro" id="IPR001423">
    <property type="entry name" value="LysoPLipase_patatin_CS"/>
</dbReference>
<dbReference type="InterPro" id="IPR050301">
    <property type="entry name" value="NTE"/>
</dbReference>
<dbReference type="InterPro" id="IPR002641">
    <property type="entry name" value="PNPLA_dom"/>
</dbReference>
<dbReference type="InterPro" id="IPR014710">
    <property type="entry name" value="RmlC-like_jellyroll"/>
</dbReference>
<dbReference type="PANTHER" id="PTHR14226:SF29">
    <property type="entry name" value="NEUROPATHY TARGET ESTERASE SWS"/>
    <property type="match status" value="1"/>
</dbReference>
<dbReference type="PANTHER" id="PTHR14226">
    <property type="entry name" value="NEUROPATHY TARGET ESTERASE/SWISS CHEESE D.MELANOGASTER"/>
    <property type="match status" value="1"/>
</dbReference>
<dbReference type="Pfam" id="PF00027">
    <property type="entry name" value="cNMP_binding"/>
    <property type="match status" value="1"/>
</dbReference>
<dbReference type="Pfam" id="PF01734">
    <property type="entry name" value="Patatin"/>
    <property type="match status" value="1"/>
</dbReference>
<dbReference type="SMART" id="SM00100">
    <property type="entry name" value="cNMP"/>
    <property type="match status" value="1"/>
</dbReference>
<dbReference type="SUPFAM" id="SSF51206">
    <property type="entry name" value="cAMP-binding domain-like"/>
    <property type="match status" value="1"/>
</dbReference>
<dbReference type="SUPFAM" id="SSF52151">
    <property type="entry name" value="FabD/lysophospholipase-like"/>
    <property type="match status" value="1"/>
</dbReference>
<dbReference type="PROSITE" id="PS50042">
    <property type="entry name" value="CNMP_BINDING_3"/>
    <property type="match status" value="1"/>
</dbReference>
<dbReference type="PROSITE" id="PS51635">
    <property type="entry name" value="PNPLA"/>
    <property type="match status" value="1"/>
</dbReference>
<dbReference type="PROSITE" id="PS01237">
    <property type="entry name" value="UPF0028"/>
    <property type="match status" value="1"/>
</dbReference>
<sequence length="583" mass="62182">MTTARRRPKRRGTDARTALRNVPILADIDDEQLERLATTVERRHVPANQWLFHAGEPADSIYIVDSGRFVAVAPEGHVFAEMASGDSIGDLGVIAGAARSAGVRALRDGVVWRIAAETFTDMLEATPLLQSAMLRAMARMLRQSRPAKTARRPRVIGVVSNGDTAAAPMVDAIATSLDSHGRTAVIAPPVETTSAVQEYDELVEAFSETLDRAERSNDWVLVVADRGAGDLWRHYVSAQSDRLVVLVDQRYPPDAVDSLATQRPVHLITCLAEPDPSWWDRLAPVSHHPANSDGFGALARRIAGRSLGLVMAGGGARGLAHFGVYQELTEAGVVIDRFGGTSSGAIASAAFALGMDAGDAIAAAREFIAGSDPLDDYTIPISALTRGGRVDRLVQGFFGNTLIEHLPRGFFSVSADMITGDQIIHRRGSVSGAVRASISIPGLIPPVHNGEQLLVDGGLLNNLPANVMCADTDGEVICVDLRRTFVPSKGFGLLPPIVTPPGLLRRLLTGTDNALPPLQETLLRAFDLAASTANLRELPRVAAIIEPDVSKIGVLNFKQIDAALEAGRMAARAALQAQPDLVR</sequence>
<accession>P9WIY6</accession>
<accession>L0TA62</accession>
<accession>P0A642</accession>
<accession>Q50733</accession>
<protein>
    <recommendedName>
        <fullName>Uncharacterized NTE family protein MT2641</fullName>
    </recommendedName>
</protein>
<name>Y2565_MYCTO</name>
<evidence type="ECO:0000255" key="1">
    <source>
        <dbReference type="PROSITE-ProRule" id="PRU00060"/>
    </source>
</evidence>
<evidence type="ECO:0000255" key="2">
    <source>
        <dbReference type="PROSITE-ProRule" id="PRU01161"/>
    </source>
</evidence>
<evidence type="ECO:0000305" key="3"/>
<gene>
    <name type="ordered locus">MT2641</name>
</gene>
<reference key="1">
    <citation type="journal article" date="2002" name="J. Bacteriol.">
        <title>Whole-genome comparison of Mycobacterium tuberculosis clinical and laboratory strains.</title>
        <authorList>
            <person name="Fleischmann R.D."/>
            <person name="Alland D."/>
            <person name="Eisen J.A."/>
            <person name="Carpenter L."/>
            <person name="White O."/>
            <person name="Peterson J.D."/>
            <person name="DeBoy R.T."/>
            <person name="Dodson R.J."/>
            <person name="Gwinn M.L."/>
            <person name="Haft D.H."/>
            <person name="Hickey E.K."/>
            <person name="Kolonay J.F."/>
            <person name="Nelson W.C."/>
            <person name="Umayam L.A."/>
            <person name="Ermolaeva M.D."/>
            <person name="Salzberg S.L."/>
            <person name="Delcher A."/>
            <person name="Utterback T.R."/>
            <person name="Weidman J.F."/>
            <person name="Khouri H.M."/>
            <person name="Gill J."/>
            <person name="Mikula A."/>
            <person name="Bishai W."/>
            <person name="Jacobs W.R. Jr."/>
            <person name="Venter J.C."/>
            <person name="Fraser C.M."/>
        </authorList>
    </citation>
    <scope>NUCLEOTIDE SEQUENCE [LARGE SCALE GENOMIC DNA]</scope>
    <source>
        <strain>CDC 1551 / Oshkosh</strain>
    </source>
</reference>